<organism>
    <name type="scientific">Leptolyngbya boryana</name>
    <name type="common">Plectonema boryanum</name>
    <dbReference type="NCBI Taxonomy" id="1184"/>
    <lineage>
        <taxon>Bacteria</taxon>
        <taxon>Bacillati</taxon>
        <taxon>Cyanobacteriota</taxon>
        <taxon>Cyanophyceae</taxon>
        <taxon>Leptolyngbyales</taxon>
        <taxon>Leptolyngbyaceae</taxon>
        <taxon>Leptolyngbya group</taxon>
        <taxon>Leptolyngbya</taxon>
    </lineage>
</organism>
<keyword id="KW-0464">Manganese</keyword>
<keyword id="KW-0479">Metal-binding</keyword>
<keyword id="KW-0560">Oxidoreductase</keyword>
<keyword id="KW-0732">Signal</keyword>
<comment type="function">
    <text>Destroys superoxide anion radicals which are normally produced within the cells and which are toxic to biological systems.</text>
</comment>
<comment type="catalytic activity">
    <reaction>
        <text>2 superoxide + 2 H(+) = H2O2 + O2</text>
        <dbReference type="Rhea" id="RHEA:20696"/>
        <dbReference type="ChEBI" id="CHEBI:15378"/>
        <dbReference type="ChEBI" id="CHEBI:15379"/>
        <dbReference type="ChEBI" id="CHEBI:16240"/>
        <dbReference type="ChEBI" id="CHEBI:18421"/>
        <dbReference type="EC" id="1.15.1.1"/>
    </reaction>
</comment>
<comment type="cofactor">
    <cofactor evidence="1">
        <name>Mn(2+)</name>
        <dbReference type="ChEBI" id="CHEBI:29035"/>
    </cofactor>
    <text evidence="1">Binds 1 Mn(2+) ion per subunit.</text>
</comment>
<comment type="subunit">
    <text evidence="1">Homodimer.</text>
</comment>
<comment type="induction">
    <text>Constitutively expressed.</text>
</comment>
<comment type="similarity">
    <text evidence="3">Belongs to the iron/manganese superoxide dismutase family.</text>
</comment>
<dbReference type="EC" id="1.15.1.1"/>
<dbReference type="EMBL" id="U17609">
    <property type="protein sequence ID" value="AAA69950.1"/>
    <property type="molecule type" value="Genomic_DNA"/>
</dbReference>
<dbReference type="SMR" id="P50058"/>
<dbReference type="GO" id="GO:0005737">
    <property type="term" value="C:cytoplasm"/>
    <property type="evidence" value="ECO:0007669"/>
    <property type="project" value="TreeGrafter"/>
</dbReference>
<dbReference type="GO" id="GO:0046872">
    <property type="term" value="F:metal ion binding"/>
    <property type="evidence" value="ECO:0007669"/>
    <property type="project" value="UniProtKB-KW"/>
</dbReference>
<dbReference type="GO" id="GO:0004784">
    <property type="term" value="F:superoxide dismutase activity"/>
    <property type="evidence" value="ECO:0007669"/>
    <property type="project" value="UniProtKB-EC"/>
</dbReference>
<dbReference type="FunFam" id="1.10.287.990:FF:000001">
    <property type="entry name" value="Superoxide dismutase"/>
    <property type="match status" value="1"/>
</dbReference>
<dbReference type="FunFam" id="3.55.40.20:FF:000001">
    <property type="entry name" value="Superoxide dismutase"/>
    <property type="match status" value="1"/>
</dbReference>
<dbReference type="Gene3D" id="1.10.287.990">
    <property type="entry name" value="Fe,Mn superoxide dismutase (SOD) domain"/>
    <property type="match status" value="1"/>
</dbReference>
<dbReference type="Gene3D" id="3.55.40.20">
    <property type="entry name" value="Iron/manganese superoxide dismutase, C-terminal domain"/>
    <property type="match status" value="1"/>
</dbReference>
<dbReference type="InterPro" id="IPR001189">
    <property type="entry name" value="Mn/Fe_SOD"/>
</dbReference>
<dbReference type="InterPro" id="IPR019833">
    <property type="entry name" value="Mn/Fe_SOD_BS"/>
</dbReference>
<dbReference type="InterPro" id="IPR019832">
    <property type="entry name" value="Mn/Fe_SOD_C"/>
</dbReference>
<dbReference type="InterPro" id="IPR019831">
    <property type="entry name" value="Mn/Fe_SOD_N"/>
</dbReference>
<dbReference type="InterPro" id="IPR036324">
    <property type="entry name" value="Mn/Fe_SOD_N_sf"/>
</dbReference>
<dbReference type="InterPro" id="IPR036314">
    <property type="entry name" value="SOD_C_sf"/>
</dbReference>
<dbReference type="PANTHER" id="PTHR43595">
    <property type="entry name" value="37S RIBOSOMAL PROTEIN S26, MITOCHONDRIAL"/>
    <property type="match status" value="1"/>
</dbReference>
<dbReference type="PANTHER" id="PTHR43595:SF2">
    <property type="entry name" value="SMALL RIBOSOMAL SUBUNIT PROTEIN MS42"/>
    <property type="match status" value="1"/>
</dbReference>
<dbReference type="Pfam" id="PF02777">
    <property type="entry name" value="Sod_Fe_C"/>
    <property type="match status" value="1"/>
</dbReference>
<dbReference type="Pfam" id="PF00081">
    <property type="entry name" value="Sod_Fe_N"/>
    <property type="match status" value="1"/>
</dbReference>
<dbReference type="PIRSF" id="PIRSF000349">
    <property type="entry name" value="SODismutase"/>
    <property type="match status" value="1"/>
</dbReference>
<dbReference type="PRINTS" id="PR01703">
    <property type="entry name" value="MNSODISMTASE"/>
</dbReference>
<dbReference type="SUPFAM" id="SSF54719">
    <property type="entry name" value="Fe,Mn superoxide dismutase (SOD), C-terminal domain"/>
    <property type="match status" value="1"/>
</dbReference>
<dbReference type="SUPFAM" id="SSF46609">
    <property type="entry name" value="Fe,Mn superoxide dismutase (SOD), N-terminal domain"/>
    <property type="match status" value="1"/>
</dbReference>
<dbReference type="PROSITE" id="PS00088">
    <property type="entry name" value="SOD_MN"/>
    <property type="match status" value="1"/>
</dbReference>
<name>SODM1_LEPBY</name>
<protein>
    <recommendedName>
        <fullName>Superoxide dismutase [Mn] 1</fullName>
        <ecNumber>1.15.1.1</ecNumber>
    </recommendedName>
</protein>
<accession>P50058</accession>
<sequence>MQTTFRRILILFVGLLVPLFFACQSNSQVDAAPSAAPQLSASPAKLDPLPYDYAALEPYIDAQTMRLHHDKHHATYVNNINETLKAYPDLQKQSVDSLIQNLNQVPEAIRTKIRNNGGGHVNHTMFWQIMAPKAGGTPTGAVAKAIDQTFGSFDAFKQQFNKAGADRFGSGWAWLVSDRQGKLSITSTANQDNPLMSNPNAYPILGNDVWEHAYYLKYQNRRAEYLTNWWNVVNWQAVNQRYAQAQRK</sequence>
<proteinExistence type="evidence at transcript level"/>
<feature type="signal peptide" evidence="2">
    <location>
        <begin position="1"/>
        <end position="41"/>
    </location>
</feature>
<feature type="chain" id="PRO_0000032904" description="Superoxide dismutase [Mn] 1">
    <location>
        <begin position="42"/>
        <end position="248"/>
    </location>
</feature>
<feature type="binding site" evidence="1">
    <location>
        <position position="68"/>
    </location>
    <ligand>
        <name>Mn(2+)</name>
        <dbReference type="ChEBI" id="CHEBI:29035"/>
    </ligand>
</feature>
<feature type="binding site" evidence="1">
    <location>
        <position position="123"/>
    </location>
    <ligand>
        <name>Mn(2+)</name>
        <dbReference type="ChEBI" id="CHEBI:29035"/>
    </ligand>
</feature>
<feature type="binding site" evidence="1">
    <location>
        <position position="208"/>
    </location>
    <ligand>
        <name>Mn(2+)</name>
        <dbReference type="ChEBI" id="CHEBI:29035"/>
    </ligand>
</feature>
<feature type="binding site" evidence="1">
    <location>
        <position position="212"/>
    </location>
    <ligand>
        <name>Mn(2+)</name>
        <dbReference type="ChEBI" id="CHEBI:29035"/>
    </ligand>
</feature>
<reference key="1">
    <citation type="journal article" date="1995" name="J. Bacteriol.">
        <title>Characterization of four superoxide dismutase genes from a filamentous cyanobacterium.</title>
        <authorList>
            <person name="Campbell W.S."/>
            <person name="Laudenbach D.E."/>
        </authorList>
    </citation>
    <scope>NUCLEOTIDE SEQUENCE [GENOMIC DNA]</scope>
    <source>
        <strain>UTEX 485 / CCAP 1462/4</strain>
    </source>
</reference>
<gene>
    <name type="primary">sodA1</name>
</gene>
<evidence type="ECO:0000250" key="1"/>
<evidence type="ECO:0000255" key="2"/>
<evidence type="ECO:0000305" key="3"/>